<protein>
    <recommendedName>
        <fullName evidence="2">tRNA (guanine-N(7)-)-methyltransferase</fullName>
        <ecNumber evidence="2">2.1.1.33</ecNumber>
    </recommendedName>
    <alternativeName>
        <fullName evidence="2">tRNA (guanine(46)-N(7))-methyltransferase</fullName>
    </alternativeName>
    <alternativeName>
        <fullName evidence="2">tRNA(m7G46)-methyltransferase</fullName>
    </alternativeName>
</protein>
<name>TRMB_ALIFM</name>
<evidence type="ECO:0000250" key="1"/>
<evidence type="ECO:0000255" key="2">
    <source>
        <dbReference type="HAMAP-Rule" id="MF_01057"/>
    </source>
</evidence>
<gene>
    <name evidence="2" type="primary">trmB</name>
    <name type="ordered locus">VFMJ11_0422</name>
</gene>
<keyword id="KW-0489">Methyltransferase</keyword>
<keyword id="KW-0949">S-adenosyl-L-methionine</keyword>
<keyword id="KW-0808">Transferase</keyword>
<keyword id="KW-0819">tRNA processing</keyword>
<dbReference type="EC" id="2.1.1.33" evidence="2"/>
<dbReference type="EMBL" id="CP001139">
    <property type="protein sequence ID" value="ACH66690.1"/>
    <property type="molecule type" value="Genomic_DNA"/>
</dbReference>
<dbReference type="RefSeq" id="WP_005417556.1">
    <property type="nucleotide sequence ID" value="NC_011184.1"/>
</dbReference>
<dbReference type="SMR" id="B5F9R5"/>
<dbReference type="GeneID" id="54163059"/>
<dbReference type="KEGG" id="vfm:VFMJ11_0422"/>
<dbReference type="HOGENOM" id="CLU_050910_0_1_6"/>
<dbReference type="UniPathway" id="UPA00989"/>
<dbReference type="Proteomes" id="UP000001857">
    <property type="component" value="Chromosome I"/>
</dbReference>
<dbReference type="GO" id="GO:0043527">
    <property type="term" value="C:tRNA methyltransferase complex"/>
    <property type="evidence" value="ECO:0007669"/>
    <property type="project" value="TreeGrafter"/>
</dbReference>
<dbReference type="GO" id="GO:0008176">
    <property type="term" value="F:tRNA (guanine(46)-N7)-methyltransferase activity"/>
    <property type="evidence" value="ECO:0007669"/>
    <property type="project" value="UniProtKB-UniRule"/>
</dbReference>
<dbReference type="FunFam" id="3.40.50.150:FF:000024">
    <property type="entry name" value="tRNA (guanine-N(7)-)-methyltransferase"/>
    <property type="match status" value="1"/>
</dbReference>
<dbReference type="Gene3D" id="3.40.50.150">
    <property type="entry name" value="Vaccinia Virus protein VP39"/>
    <property type="match status" value="1"/>
</dbReference>
<dbReference type="HAMAP" id="MF_01057">
    <property type="entry name" value="tRNA_methyltr_TrmB"/>
    <property type="match status" value="1"/>
</dbReference>
<dbReference type="InterPro" id="IPR029063">
    <property type="entry name" value="SAM-dependent_MTases_sf"/>
</dbReference>
<dbReference type="InterPro" id="IPR003358">
    <property type="entry name" value="tRNA_(Gua-N-7)_MeTrfase_Trmb"/>
</dbReference>
<dbReference type="InterPro" id="IPR055361">
    <property type="entry name" value="tRNA_methyltr_TrmB_bact"/>
</dbReference>
<dbReference type="NCBIfam" id="TIGR00091">
    <property type="entry name" value="tRNA (guanosine(46)-N7)-methyltransferase TrmB"/>
    <property type="match status" value="1"/>
</dbReference>
<dbReference type="PANTHER" id="PTHR23417">
    <property type="entry name" value="3-DEOXY-D-MANNO-OCTULOSONIC-ACID TRANSFERASE/TRNA GUANINE-N 7 - -METHYLTRANSFERASE"/>
    <property type="match status" value="1"/>
</dbReference>
<dbReference type="PANTHER" id="PTHR23417:SF14">
    <property type="entry name" value="PENTACOTRIPEPTIDE-REPEAT REGION OF PRORP DOMAIN-CONTAINING PROTEIN"/>
    <property type="match status" value="1"/>
</dbReference>
<dbReference type="Pfam" id="PF02390">
    <property type="entry name" value="Methyltransf_4"/>
    <property type="match status" value="1"/>
</dbReference>
<dbReference type="SUPFAM" id="SSF53335">
    <property type="entry name" value="S-adenosyl-L-methionine-dependent methyltransferases"/>
    <property type="match status" value="1"/>
</dbReference>
<dbReference type="PROSITE" id="PS51625">
    <property type="entry name" value="SAM_MT_TRMB"/>
    <property type="match status" value="1"/>
</dbReference>
<reference key="1">
    <citation type="submission" date="2008-08" db="EMBL/GenBank/DDBJ databases">
        <title>Complete sequence of Vibrio fischeri strain MJ11.</title>
        <authorList>
            <person name="Mandel M.J."/>
            <person name="Stabb E.V."/>
            <person name="Ruby E.G."/>
            <person name="Ferriera S."/>
            <person name="Johnson J."/>
            <person name="Kravitz S."/>
            <person name="Beeson K."/>
            <person name="Sutton G."/>
            <person name="Rogers Y.-H."/>
            <person name="Friedman R."/>
            <person name="Frazier M."/>
            <person name="Venter J.C."/>
        </authorList>
    </citation>
    <scope>NUCLEOTIDE SEQUENCE [LARGE SCALE GENOMIC DNA]</scope>
    <source>
        <strain>MJ11</strain>
    </source>
</reference>
<accession>B5F9R5</accession>
<proteinExistence type="inferred from homology"/>
<comment type="function">
    <text evidence="2">Catalyzes the formation of N(7)-methylguanine at position 46 (m7G46) in tRNA.</text>
</comment>
<comment type="catalytic activity">
    <reaction evidence="2">
        <text>guanosine(46) in tRNA + S-adenosyl-L-methionine = N(7)-methylguanosine(46) in tRNA + S-adenosyl-L-homocysteine</text>
        <dbReference type="Rhea" id="RHEA:42708"/>
        <dbReference type="Rhea" id="RHEA-COMP:10188"/>
        <dbReference type="Rhea" id="RHEA-COMP:10189"/>
        <dbReference type="ChEBI" id="CHEBI:57856"/>
        <dbReference type="ChEBI" id="CHEBI:59789"/>
        <dbReference type="ChEBI" id="CHEBI:74269"/>
        <dbReference type="ChEBI" id="CHEBI:74480"/>
        <dbReference type="EC" id="2.1.1.33"/>
    </reaction>
</comment>
<comment type="pathway">
    <text evidence="2">tRNA modification; N(7)-methylguanine-tRNA biosynthesis.</text>
</comment>
<comment type="similarity">
    <text evidence="2">Belongs to the class I-like SAM-binding methyltransferase superfamily. TrmB family.</text>
</comment>
<organism>
    <name type="scientific">Aliivibrio fischeri (strain MJ11)</name>
    <name type="common">Vibrio fischeri</name>
    <dbReference type="NCBI Taxonomy" id="388396"/>
    <lineage>
        <taxon>Bacteria</taxon>
        <taxon>Pseudomonadati</taxon>
        <taxon>Pseudomonadota</taxon>
        <taxon>Gammaproteobacteria</taxon>
        <taxon>Vibrionales</taxon>
        <taxon>Vibrionaceae</taxon>
        <taxon>Aliivibrio</taxon>
    </lineage>
</organism>
<sequence>MTEVTKNDFTEEGKIVRKIRSFVRREGRLTKGQEGAIQECWPSMGIDFVEQMLDWNEVFGNNNPVVLEIGFGMGASLVEMAKNAPEKNFLGIEVHRPGVGACLAAAKEAGVTNLRVMCHDAVEVFESMIPDSSVNTLQLFFPDPWHKARHHKRRIVKAEFAEMIRPKLIQGGIFHMATDWENYSEHMIEVMNAAPGYENIATDGDFIPRPDERPLTKFEARGHRLGHGVWDIKFRRNA</sequence>
<feature type="chain" id="PRO_1000149672" description="tRNA (guanine-N(7)-)-methyltransferase">
    <location>
        <begin position="1"/>
        <end position="238"/>
    </location>
</feature>
<feature type="active site" evidence="1">
    <location>
        <position position="143"/>
    </location>
</feature>
<feature type="binding site" evidence="2">
    <location>
        <position position="68"/>
    </location>
    <ligand>
        <name>S-adenosyl-L-methionine</name>
        <dbReference type="ChEBI" id="CHEBI:59789"/>
    </ligand>
</feature>
<feature type="binding site" evidence="2">
    <location>
        <position position="93"/>
    </location>
    <ligand>
        <name>S-adenosyl-L-methionine</name>
        <dbReference type="ChEBI" id="CHEBI:59789"/>
    </ligand>
</feature>
<feature type="binding site" evidence="2">
    <location>
        <position position="120"/>
    </location>
    <ligand>
        <name>S-adenosyl-L-methionine</name>
        <dbReference type="ChEBI" id="CHEBI:59789"/>
    </ligand>
</feature>
<feature type="binding site" evidence="2">
    <location>
        <position position="143"/>
    </location>
    <ligand>
        <name>S-adenosyl-L-methionine</name>
        <dbReference type="ChEBI" id="CHEBI:59789"/>
    </ligand>
</feature>
<feature type="binding site" evidence="2">
    <location>
        <position position="147"/>
    </location>
    <ligand>
        <name>substrate</name>
    </ligand>
</feature>
<feature type="binding site" evidence="2">
    <location>
        <position position="179"/>
    </location>
    <ligand>
        <name>substrate</name>
    </ligand>
</feature>
<feature type="binding site" evidence="2">
    <location>
        <begin position="216"/>
        <end position="219"/>
    </location>
    <ligand>
        <name>substrate</name>
    </ligand>
</feature>